<comment type="function">
    <text evidence="1">Copper-sensitive repressor that has a key role in copper homeostasis. It is part of the cso operon involved in the cellular response to increasing concentrations of copper inside the bacterium, which can be highly toxic. In the presence of copper, CsoR fully dissociates from the promoter in the cso operon, leading to the transcription of its genes. Binds to a GC-rich pseudopallindromic sequence, 5'-GTAGCCCACCCCCAGTGGGGTGGGA-3', in the cso promoter region (By similarity).</text>
</comment>
<comment type="subunit">
    <text evidence="1">Homodimer.</text>
</comment>
<comment type="subcellular location">
    <subcellularLocation>
        <location evidence="1">Cytoplasm</location>
    </subcellularLocation>
</comment>
<comment type="domain">
    <text evidence="1">This protein has an antiparallel four-helix bundle architecture that represents a novel DNA-binding fold.</text>
</comment>
<comment type="similarity">
    <text evidence="3">Belongs to the CsoR family.</text>
</comment>
<evidence type="ECO:0000250" key="1"/>
<evidence type="ECO:0000256" key="2">
    <source>
        <dbReference type="SAM" id="MobiDB-lite"/>
    </source>
</evidence>
<evidence type="ECO:0000305" key="3"/>
<gene>
    <name type="primary">csoR</name>
    <name type="ordered locus">TBFG_10985</name>
</gene>
<accession>A1QQ42</accession>
<name>CSOR_MYCTF</name>
<keyword id="KW-0186">Copper</keyword>
<keyword id="KW-0963">Cytoplasm</keyword>
<keyword id="KW-0238">DNA-binding</keyword>
<keyword id="KW-0479">Metal-binding</keyword>
<keyword id="KW-0678">Repressor</keyword>
<keyword id="KW-0804">Transcription</keyword>
<keyword id="KW-0805">Transcription regulation</keyword>
<proteinExistence type="inferred from homology"/>
<dbReference type="EMBL" id="CP000717">
    <property type="protein sequence ID" value="ABR05328.1"/>
    <property type="molecule type" value="Genomic_DNA"/>
</dbReference>
<dbReference type="RefSeq" id="WP_003404935.1">
    <property type="nucleotide sequence ID" value="NZ_KK339377.1"/>
</dbReference>
<dbReference type="SMR" id="A1QQ42"/>
<dbReference type="KEGG" id="mtf:TBFG_10985"/>
<dbReference type="PATRIC" id="fig|336982.11.peg.1077"/>
<dbReference type="HOGENOM" id="CLU_130332_1_1_11"/>
<dbReference type="GO" id="GO:0005737">
    <property type="term" value="C:cytoplasm"/>
    <property type="evidence" value="ECO:0007669"/>
    <property type="project" value="UniProtKB-SubCell"/>
</dbReference>
<dbReference type="GO" id="GO:0003677">
    <property type="term" value="F:DNA binding"/>
    <property type="evidence" value="ECO:0007669"/>
    <property type="project" value="UniProtKB-KW"/>
</dbReference>
<dbReference type="GO" id="GO:0046872">
    <property type="term" value="F:metal ion binding"/>
    <property type="evidence" value="ECO:0007669"/>
    <property type="project" value="UniProtKB-KW"/>
</dbReference>
<dbReference type="GO" id="GO:0045892">
    <property type="term" value="P:negative regulation of DNA-templated transcription"/>
    <property type="evidence" value="ECO:0007669"/>
    <property type="project" value="UniProtKB-ARBA"/>
</dbReference>
<dbReference type="CDD" id="cd10151">
    <property type="entry name" value="TthCsoR-like_DUF156"/>
    <property type="match status" value="1"/>
</dbReference>
<dbReference type="FunFam" id="1.20.58.1000:FF:000004">
    <property type="entry name" value="Copper-sensing transcriptional repressor CsoR"/>
    <property type="match status" value="1"/>
</dbReference>
<dbReference type="Gene3D" id="1.20.58.1000">
    <property type="entry name" value="Metal-sensitive repressor, helix protomer"/>
    <property type="match status" value="1"/>
</dbReference>
<dbReference type="InterPro" id="IPR003735">
    <property type="entry name" value="Metal_Tscrpt_repr"/>
</dbReference>
<dbReference type="InterPro" id="IPR038390">
    <property type="entry name" value="Metal_Tscrpt_repr_sf"/>
</dbReference>
<dbReference type="PANTHER" id="PTHR33677:SF4">
    <property type="entry name" value="COPPER-SENSING TRANSCRIPTIONAL REPRESSOR CSOR"/>
    <property type="match status" value="1"/>
</dbReference>
<dbReference type="PANTHER" id="PTHR33677">
    <property type="entry name" value="TRANSCRIPTIONAL REPRESSOR FRMR-RELATED"/>
    <property type="match status" value="1"/>
</dbReference>
<dbReference type="Pfam" id="PF02583">
    <property type="entry name" value="Trns_repr_metal"/>
    <property type="match status" value="1"/>
</dbReference>
<feature type="chain" id="PRO_0000295582" description="Copper-sensing transcriptional repressor CsoR">
    <location>
        <begin position="1"/>
        <end position="119"/>
    </location>
</feature>
<feature type="region of interest" description="Disordered" evidence="2">
    <location>
        <begin position="99"/>
        <end position="119"/>
    </location>
</feature>
<feature type="binding site" description="in other chain" evidence="1">
    <location>
        <position position="36"/>
    </location>
    <ligand>
        <name>Cu cation</name>
        <dbReference type="ChEBI" id="CHEBI:23378"/>
        <note>ligand shared between dimeric partners</note>
    </ligand>
</feature>
<feature type="binding site" evidence="1">
    <location>
        <position position="61"/>
    </location>
    <ligand>
        <name>Cu cation</name>
        <dbReference type="ChEBI" id="CHEBI:23378"/>
        <note>ligand shared between dimeric partners</note>
    </ligand>
</feature>
<feature type="binding site" evidence="1">
    <location>
        <position position="65"/>
    </location>
    <ligand>
        <name>Cu cation</name>
        <dbReference type="ChEBI" id="CHEBI:23378"/>
        <note>ligand shared between dimeric partners</note>
    </ligand>
</feature>
<reference key="1">
    <citation type="submission" date="2007-04" db="EMBL/GenBank/DDBJ databases">
        <title>The complete genome sequence of Mycobacterium tuberculosis F11.</title>
        <authorList>
            <person name="Birren B."/>
            <person name="Lander E."/>
            <person name="Galagan J."/>
            <person name="Devon K."/>
            <person name="Nusbaum C."/>
            <person name="Borowsky M.L."/>
            <person name="Grabherr M."/>
            <person name="Mauceli E."/>
            <person name="Brockman W."/>
            <person name="Young S."/>
            <person name="LaButti K."/>
            <person name="Pushparaj V."/>
            <person name="Sykes S."/>
            <person name="Baldwin J."/>
            <person name="Fitzgerald M."/>
            <person name="Bloom T."/>
            <person name="Zimmer A."/>
            <person name="Settipalli S."/>
            <person name="Shea T."/>
            <person name="Arachchi H."/>
            <person name="Macdonald P."/>
            <person name="Abouelleil A."/>
            <person name="Lui A."/>
            <person name="Priest M."/>
            <person name="Berlin A."/>
            <person name="Gearin G."/>
            <person name="Brown A."/>
            <person name="Aftuck L."/>
            <person name="Bessette D."/>
            <person name="Allen N."/>
            <person name="Lubonja R."/>
            <person name="Lokyitsang T."/>
            <person name="Matthews C."/>
            <person name="Dunbar C."/>
            <person name="Benamara M."/>
            <person name="Nguyen T."/>
            <person name="Negash T."/>
            <person name="DeCaprio D."/>
            <person name="Crawford M."/>
            <person name="Koehrsen M."/>
            <person name="Engels R."/>
            <person name="Montgomery P."/>
            <person name="Pearson M."/>
            <person name="Howarth C."/>
            <person name="Kodira C."/>
            <person name="Zeng Q."/>
            <person name="Yandava C."/>
            <person name="O'Leary S."/>
            <person name="Alvarado L."/>
            <person name="Victor T."/>
            <person name="Murray M."/>
        </authorList>
    </citation>
    <scope>NUCLEOTIDE SEQUENCE [LARGE SCALE GENOMIC DNA]</scope>
    <source>
        <strain>F11</strain>
    </source>
</reference>
<protein>
    <recommendedName>
        <fullName>Copper-sensing transcriptional repressor CsoR</fullName>
    </recommendedName>
    <alternativeName>
        <fullName>Copper-sensitive operon repressor</fullName>
    </alternativeName>
</protein>
<organism>
    <name type="scientific">Mycobacterium tuberculosis (strain F11)</name>
    <dbReference type="NCBI Taxonomy" id="336982"/>
    <lineage>
        <taxon>Bacteria</taxon>
        <taxon>Bacillati</taxon>
        <taxon>Actinomycetota</taxon>
        <taxon>Actinomycetes</taxon>
        <taxon>Mycobacteriales</taxon>
        <taxon>Mycobacteriaceae</taxon>
        <taxon>Mycobacterium</taxon>
        <taxon>Mycobacterium tuberculosis complex</taxon>
    </lineage>
</organism>
<sequence length="119" mass="12800">MSKELTAKKRAALNRLKTVRGHLDGIVRMLESDAYCVDVMKQISAVQSSLERANRVMLHNHLETCFSTAVLDGHGQAAIEELIDAVKFTPALTGPHARLGGAAVGESATEEPMPDASNM</sequence>